<evidence type="ECO:0000255" key="1">
    <source>
        <dbReference type="HAMAP-Rule" id="MF_00002"/>
    </source>
</evidence>
<feature type="chain" id="PRO_0000142301" description="Aspartate carbamoyltransferase regulatory chain">
    <location>
        <begin position="1"/>
        <end position="146"/>
    </location>
</feature>
<feature type="binding site" evidence="1">
    <location>
        <position position="102"/>
    </location>
    <ligand>
        <name>Zn(2+)</name>
        <dbReference type="ChEBI" id="CHEBI:29105"/>
    </ligand>
</feature>
<feature type="binding site" evidence="1">
    <location>
        <position position="107"/>
    </location>
    <ligand>
        <name>Zn(2+)</name>
        <dbReference type="ChEBI" id="CHEBI:29105"/>
    </ligand>
</feature>
<feature type="binding site" evidence="1">
    <location>
        <position position="131"/>
    </location>
    <ligand>
        <name>Zn(2+)</name>
        <dbReference type="ChEBI" id="CHEBI:29105"/>
    </ligand>
</feature>
<feature type="binding site" evidence="1">
    <location>
        <position position="134"/>
    </location>
    <ligand>
        <name>Zn(2+)</name>
        <dbReference type="ChEBI" id="CHEBI:29105"/>
    </ligand>
</feature>
<name>PYRI_CLOAB</name>
<accession>Q97FS4</accession>
<protein>
    <recommendedName>
        <fullName evidence="1">Aspartate carbamoyltransferase regulatory chain</fullName>
    </recommendedName>
</protein>
<gene>
    <name evidence="1" type="primary">pyrI</name>
    <name type="ordered locus">CA_C2653</name>
</gene>
<dbReference type="EMBL" id="AE001437">
    <property type="protein sequence ID" value="AAK80600.1"/>
    <property type="molecule type" value="Genomic_DNA"/>
</dbReference>
<dbReference type="PIR" id="E97226">
    <property type="entry name" value="E97226"/>
</dbReference>
<dbReference type="RefSeq" id="NP_349260.1">
    <property type="nucleotide sequence ID" value="NC_003030.1"/>
</dbReference>
<dbReference type="RefSeq" id="WP_010965941.1">
    <property type="nucleotide sequence ID" value="NC_003030.1"/>
</dbReference>
<dbReference type="SMR" id="Q97FS4"/>
<dbReference type="STRING" id="272562.CA_C2653"/>
<dbReference type="KEGG" id="cac:CA_C2653"/>
<dbReference type="PATRIC" id="fig|272562.8.peg.2842"/>
<dbReference type="eggNOG" id="COG1781">
    <property type="taxonomic scope" value="Bacteria"/>
</dbReference>
<dbReference type="HOGENOM" id="CLU_128576_0_0_9"/>
<dbReference type="OrthoDB" id="5599321at2"/>
<dbReference type="Proteomes" id="UP000000814">
    <property type="component" value="Chromosome"/>
</dbReference>
<dbReference type="GO" id="GO:0009347">
    <property type="term" value="C:aspartate carbamoyltransferase complex"/>
    <property type="evidence" value="ECO:0007669"/>
    <property type="project" value="InterPro"/>
</dbReference>
<dbReference type="GO" id="GO:0046872">
    <property type="term" value="F:metal ion binding"/>
    <property type="evidence" value="ECO:0007669"/>
    <property type="project" value="UniProtKB-KW"/>
</dbReference>
<dbReference type="GO" id="GO:0006207">
    <property type="term" value="P:'de novo' pyrimidine nucleobase biosynthetic process"/>
    <property type="evidence" value="ECO:0007669"/>
    <property type="project" value="InterPro"/>
</dbReference>
<dbReference type="GO" id="GO:0006221">
    <property type="term" value="P:pyrimidine nucleotide biosynthetic process"/>
    <property type="evidence" value="ECO:0007669"/>
    <property type="project" value="UniProtKB-UniRule"/>
</dbReference>
<dbReference type="Gene3D" id="2.30.30.20">
    <property type="entry name" value="Aspartate carbamoyltransferase regulatory subunit, C-terminal domain"/>
    <property type="match status" value="1"/>
</dbReference>
<dbReference type="Gene3D" id="3.30.70.140">
    <property type="entry name" value="Aspartate carbamoyltransferase regulatory subunit, N-terminal domain"/>
    <property type="match status" value="1"/>
</dbReference>
<dbReference type="HAMAP" id="MF_00002">
    <property type="entry name" value="Asp_carb_tr_reg"/>
    <property type="match status" value="1"/>
</dbReference>
<dbReference type="InterPro" id="IPR020545">
    <property type="entry name" value="Asp_carbamoyltransf_reg_N"/>
</dbReference>
<dbReference type="InterPro" id="IPR002801">
    <property type="entry name" value="Asp_carbamoylTrfase_reg"/>
</dbReference>
<dbReference type="InterPro" id="IPR020542">
    <property type="entry name" value="Asp_carbamoyltrfase_reg_C"/>
</dbReference>
<dbReference type="InterPro" id="IPR036792">
    <property type="entry name" value="Asp_carbatrfase_reg_C_sf"/>
</dbReference>
<dbReference type="InterPro" id="IPR036793">
    <property type="entry name" value="Asp_carbatrfase_reg_N_sf"/>
</dbReference>
<dbReference type="NCBIfam" id="NF002063">
    <property type="entry name" value="PRK00893.1-3"/>
    <property type="match status" value="1"/>
</dbReference>
<dbReference type="PANTHER" id="PTHR35805">
    <property type="entry name" value="ASPARTATE CARBAMOYLTRANSFERASE REGULATORY CHAIN"/>
    <property type="match status" value="1"/>
</dbReference>
<dbReference type="PANTHER" id="PTHR35805:SF1">
    <property type="entry name" value="ASPARTATE CARBAMOYLTRANSFERASE REGULATORY CHAIN"/>
    <property type="match status" value="1"/>
</dbReference>
<dbReference type="Pfam" id="PF01948">
    <property type="entry name" value="PyrI"/>
    <property type="match status" value="1"/>
</dbReference>
<dbReference type="Pfam" id="PF02748">
    <property type="entry name" value="PyrI_C"/>
    <property type="match status" value="1"/>
</dbReference>
<dbReference type="SUPFAM" id="SSF57825">
    <property type="entry name" value="Aspartate carbamoyltransferase, Regulatory-chain, C-terminal domain"/>
    <property type="match status" value="1"/>
</dbReference>
<dbReference type="SUPFAM" id="SSF54893">
    <property type="entry name" value="Aspartate carbamoyltransferase, Regulatory-chain, N-terminal domain"/>
    <property type="match status" value="1"/>
</dbReference>
<sequence length="146" mass="16535">MLTINSIKNGIVIDHIKAGHGIKIYNYLKLGEAEFPTALIMNAISKKNKAKDIIKIENVMDLDLAVLGFLDPNITVNIIEDEKIRQKIQLKLPSEVNNIIKCSNPRCVTSVESYIPHKFKLVDEEKGEYKCEYCDEIYKGAKALEI</sequence>
<reference key="1">
    <citation type="journal article" date="2001" name="J. Bacteriol.">
        <title>Genome sequence and comparative analysis of the solvent-producing bacterium Clostridium acetobutylicum.</title>
        <authorList>
            <person name="Noelling J."/>
            <person name="Breton G."/>
            <person name="Omelchenko M.V."/>
            <person name="Makarova K.S."/>
            <person name="Zeng Q."/>
            <person name="Gibson R."/>
            <person name="Lee H.M."/>
            <person name="Dubois J."/>
            <person name="Qiu D."/>
            <person name="Hitti J."/>
            <person name="Wolf Y.I."/>
            <person name="Tatusov R.L."/>
            <person name="Sabathe F."/>
            <person name="Doucette-Stamm L.A."/>
            <person name="Soucaille P."/>
            <person name="Daly M.J."/>
            <person name="Bennett G.N."/>
            <person name="Koonin E.V."/>
            <person name="Smith D.R."/>
        </authorList>
    </citation>
    <scope>NUCLEOTIDE SEQUENCE [LARGE SCALE GENOMIC DNA]</scope>
    <source>
        <strain>ATCC 824 / DSM 792 / JCM 1419 / IAM 19013 / LMG 5710 / NBRC 13948 / NRRL B-527 / VKM B-1787 / 2291 / W</strain>
    </source>
</reference>
<organism>
    <name type="scientific">Clostridium acetobutylicum (strain ATCC 824 / DSM 792 / JCM 1419 / IAM 19013 / LMG 5710 / NBRC 13948 / NRRL B-527 / VKM B-1787 / 2291 / W)</name>
    <dbReference type="NCBI Taxonomy" id="272562"/>
    <lineage>
        <taxon>Bacteria</taxon>
        <taxon>Bacillati</taxon>
        <taxon>Bacillota</taxon>
        <taxon>Clostridia</taxon>
        <taxon>Eubacteriales</taxon>
        <taxon>Clostridiaceae</taxon>
        <taxon>Clostridium</taxon>
    </lineage>
</organism>
<keyword id="KW-0479">Metal-binding</keyword>
<keyword id="KW-0665">Pyrimidine biosynthesis</keyword>
<keyword id="KW-1185">Reference proteome</keyword>
<keyword id="KW-0862">Zinc</keyword>
<proteinExistence type="inferred from homology"/>
<comment type="function">
    <text evidence="1">Involved in allosteric regulation of aspartate carbamoyltransferase.</text>
</comment>
<comment type="cofactor">
    <cofactor evidence="1">
        <name>Zn(2+)</name>
        <dbReference type="ChEBI" id="CHEBI:29105"/>
    </cofactor>
    <text evidence="1">Binds 1 zinc ion per subunit.</text>
</comment>
<comment type="subunit">
    <text evidence="1">Contains catalytic and regulatory chains.</text>
</comment>
<comment type="similarity">
    <text evidence="1">Belongs to the PyrI family.</text>
</comment>